<feature type="chain" id="PRO_0000414244" description="Cell division inhibitor SulA">
    <location>
        <begin position="1"/>
        <end position="168"/>
    </location>
</feature>
<feature type="region of interest" description="FtsZ binding" evidence="1">
    <location>
        <begin position="104"/>
        <end position="110"/>
    </location>
</feature>
<feature type="site" description="Essential for degradation by Lon protease" evidence="1">
    <location>
        <position position="168"/>
    </location>
</feature>
<comment type="function">
    <text evidence="1">Component of the SOS system and an inhibitor of cell division. Accumulation of SulA causes rapid cessation of cell division and the appearance of long, non-septate filaments. In the presence of GTP, binds a polymerization-competent form of FtsZ in a 1:1 ratio, thus inhibiting FtsZ polymerization and therefore preventing it from participating in the assembly of the Z ring. This mechanism prevents the premature segregation of damaged DNA to daughter cells during cell division (By similarity).</text>
</comment>
<comment type="subunit">
    <text evidence="1">Interacts with FtsZ.</text>
</comment>
<comment type="induction">
    <text evidence="1">By DNA damage, as part of the SOS response.</text>
</comment>
<comment type="PTM">
    <text evidence="1">Is rapidly cleaved and degraded by the Lon protease once DNA damage is repaired.</text>
</comment>
<comment type="similarity">
    <text evidence="2">Belongs to the SulA family.</text>
</comment>
<comment type="sequence caution" evidence="2">
    <conflict type="erroneous initiation">
        <sequence resource="EMBL-CDS" id="ACY84112"/>
    </conflict>
    <text>Truncated N-terminus.</text>
</comment>
<keyword id="KW-0131">Cell cycle</keyword>
<keyword id="KW-0132">Cell division</keyword>
<keyword id="KW-0227">DNA damage</keyword>
<keyword id="KW-1185">Reference proteome</keyword>
<keyword id="KW-0717">Septation</keyword>
<keyword id="KW-0742">SOS response</keyword>
<accession>D0ZFT0</accession>
<organism>
    <name type="scientific">Edwardsiella piscicida</name>
    <dbReference type="NCBI Taxonomy" id="1263550"/>
    <lineage>
        <taxon>Bacteria</taxon>
        <taxon>Pseudomonadati</taxon>
        <taxon>Pseudomonadota</taxon>
        <taxon>Gammaproteobacteria</taxon>
        <taxon>Enterobacterales</taxon>
        <taxon>Hafniaceae</taxon>
        <taxon>Edwardsiella</taxon>
    </lineage>
</organism>
<reference key="1">
    <citation type="journal article" date="2009" name="PLoS ONE">
        <title>Genome sequence of the versatile fish pathogen Edwardsiella tarda provides insights into its adaptation to broad host ranges and intracellular niches.</title>
        <authorList>
            <person name="Wang Q."/>
            <person name="Yang M."/>
            <person name="Xiao J."/>
            <person name="Wu H."/>
            <person name="Wang X."/>
            <person name="Lv Y."/>
            <person name="Xu L."/>
            <person name="Zheng H."/>
            <person name="Wang S."/>
            <person name="Zhao G."/>
            <person name="Liu Q."/>
            <person name="Zhang Y."/>
        </authorList>
    </citation>
    <scope>NUCLEOTIDE SEQUENCE [LARGE SCALE GENOMIC DNA]</scope>
    <source>
        <strain>EIB202 / CCTCC M208068</strain>
    </source>
</reference>
<name>SULA_EDWPI</name>
<gene>
    <name type="primary">sulA</name>
    <name type="ordered locus">ETAE_1269</name>
</gene>
<dbReference type="EMBL" id="CP001135">
    <property type="protein sequence ID" value="ACY84112.1"/>
    <property type="status" value="ALT_INIT"/>
    <property type="molecule type" value="Genomic_DNA"/>
</dbReference>
<dbReference type="RefSeq" id="WP_034168149.1">
    <property type="nucleotide sequence ID" value="NZ_CP019440.1"/>
</dbReference>
<dbReference type="SMR" id="D0ZFT0"/>
<dbReference type="KEGG" id="etr:ETAE_1269"/>
<dbReference type="HOGENOM" id="CLU_118972_2_0_6"/>
<dbReference type="Proteomes" id="UP000002634">
    <property type="component" value="Chromosome"/>
</dbReference>
<dbReference type="GO" id="GO:0000917">
    <property type="term" value="P:division septum assembly"/>
    <property type="evidence" value="ECO:0007669"/>
    <property type="project" value="UniProtKB-KW"/>
</dbReference>
<dbReference type="GO" id="GO:0006281">
    <property type="term" value="P:DNA repair"/>
    <property type="evidence" value="ECO:0007669"/>
    <property type="project" value="TreeGrafter"/>
</dbReference>
<dbReference type="GO" id="GO:0051782">
    <property type="term" value="P:negative regulation of cell division"/>
    <property type="evidence" value="ECO:0007669"/>
    <property type="project" value="UniProtKB-UniRule"/>
</dbReference>
<dbReference type="GO" id="GO:0009432">
    <property type="term" value="P:SOS response"/>
    <property type="evidence" value="ECO:0007669"/>
    <property type="project" value="UniProtKB-UniRule"/>
</dbReference>
<dbReference type="Gene3D" id="3.40.50.300">
    <property type="entry name" value="P-loop containing nucleotide triphosphate hydrolases"/>
    <property type="match status" value="1"/>
</dbReference>
<dbReference type="InterPro" id="IPR004596">
    <property type="entry name" value="Cell_div_suppressor_SulA"/>
</dbReference>
<dbReference type="InterPro" id="IPR027417">
    <property type="entry name" value="P-loop_NTPase"/>
</dbReference>
<dbReference type="InterPro" id="IPR050356">
    <property type="entry name" value="SulA_CellDiv_inhibitor"/>
</dbReference>
<dbReference type="InterPro" id="IPR047696">
    <property type="entry name" value="SulA_enterobact"/>
</dbReference>
<dbReference type="NCBIfam" id="NF007892">
    <property type="entry name" value="PRK10595.1"/>
    <property type="match status" value="1"/>
</dbReference>
<dbReference type="NCBIfam" id="TIGR00623">
    <property type="entry name" value="SOS_SulA_coli"/>
    <property type="match status" value="1"/>
</dbReference>
<dbReference type="PANTHER" id="PTHR35369">
    <property type="entry name" value="BLR3025 PROTEIN-RELATED"/>
    <property type="match status" value="1"/>
</dbReference>
<dbReference type="PANTHER" id="PTHR35369:SF4">
    <property type="entry name" value="CELL DIVISION INHIBITOR SULA"/>
    <property type="match status" value="1"/>
</dbReference>
<dbReference type="Pfam" id="PF03846">
    <property type="entry name" value="SulA"/>
    <property type="match status" value="1"/>
</dbReference>
<dbReference type="SUPFAM" id="SSF52540">
    <property type="entry name" value="P-loop containing nucleoside triphosphate hydrolases"/>
    <property type="match status" value="1"/>
</dbReference>
<sequence>MRTSPLHPATDSVVFSRPACQSAPTVPQSGFVSELGYGAQQPLLSLLLPPLLRQLGEQSRWQLWITAQHKPSKRWLSACGVPVHKVMQLRRAEAGEAIYAMEQALRSGNYSVVLGWLPPLTAAERLRLNRAAQAGRSIGLLMQPQEGKLAAAAPPQAHAANRGSARYH</sequence>
<proteinExistence type="inferred from homology"/>
<evidence type="ECO:0000250" key="1"/>
<evidence type="ECO:0000305" key="2"/>
<protein>
    <recommendedName>
        <fullName>Cell division inhibitor SulA</fullName>
    </recommendedName>
</protein>